<proteinExistence type="inferred from homology"/>
<comment type="function">
    <text evidence="1">Part of the ABC transporter complex NikABCDE (Opp2) involved in nickel import. Probably responsible for energy coupling to the transport system.</text>
</comment>
<comment type="catalytic activity">
    <reaction evidence="1">
        <text>Ni(2+)(out) + ATP + H2O = Ni(2+)(in) + ADP + phosphate + H(+)</text>
        <dbReference type="Rhea" id="RHEA:15557"/>
        <dbReference type="ChEBI" id="CHEBI:15377"/>
        <dbReference type="ChEBI" id="CHEBI:15378"/>
        <dbReference type="ChEBI" id="CHEBI:30616"/>
        <dbReference type="ChEBI" id="CHEBI:43474"/>
        <dbReference type="ChEBI" id="CHEBI:49786"/>
        <dbReference type="ChEBI" id="CHEBI:456216"/>
        <dbReference type="EC" id="7.2.2.11"/>
    </reaction>
    <physiologicalReaction direction="left-to-right" evidence="1">
        <dbReference type="Rhea" id="RHEA:15558"/>
    </physiologicalReaction>
</comment>
<comment type="subunit">
    <text evidence="1">The complex is composed of two ATP-binding proteins (NikD and NikE), two transmembrane proteins (NikB and NikC) and a solute-binding protein (NikA).</text>
</comment>
<comment type="subcellular location">
    <subcellularLocation>
        <location evidence="3">Cell membrane</location>
        <topology evidence="3">Peripheral membrane protein</topology>
    </subcellularLocation>
</comment>
<comment type="similarity">
    <text evidence="3">Belongs to the ABC transporter superfamily.</text>
</comment>
<feature type="chain" id="PRO_0000276802" description="Nickel import system ATP-binding protein NikE">
    <location>
        <begin position="1"/>
        <end position="233"/>
    </location>
</feature>
<feature type="domain" description="ABC transporter" evidence="2">
    <location>
        <begin position="2"/>
        <end position="228"/>
    </location>
</feature>
<feature type="binding site" evidence="2">
    <location>
        <begin position="35"/>
        <end position="42"/>
    </location>
    <ligand>
        <name>ATP</name>
        <dbReference type="ChEBI" id="CHEBI:30616"/>
    </ligand>
</feature>
<evidence type="ECO:0000250" key="1">
    <source>
        <dbReference type="UniProtKB" id="Q2FYQ8"/>
    </source>
</evidence>
<evidence type="ECO:0000255" key="2">
    <source>
        <dbReference type="PROSITE-ProRule" id="PRU00434"/>
    </source>
</evidence>
<evidence type="ECO:0000305" key="3"/>
<reference key="1">
    <citation type="journal article" date="2005" name="J. Bacteriol.">
        <title>Insights on evolution of virulence and resistance from the complete genome analysis of an early methicillin-resistant Staphylococcus aureus strain and a biofilm-producing methicillin-resistant Staphylococcus epidermidis strain.</title>
        <authorList>
            <person name="Gill S.R."/>
            <person name="Fouts D.E."/>
            <person name="Archer G.L."/>
            <person name="Mongodin E.F."/>
            <person name="DeBoy R.T."/>
            <person name="Ravel J."/>
            <person name="Paulsen I.T."/>
            <person name="Kolonay J.F."/>
            <person name="Brinkac L.M."/>
            <person name="Beanan M.J."/>
            <person name="Dodson R.J."/>
            <person name="Daugherty S.C."/>
            <person name="Madupu R."/>
            <person name="Angiuoli S.V."/>
            <person name="Durkin A.S."/>
            <person name="Haft D.H."/>
            <person name="Vamathevan J.J."/>
            <person name="Khouri H."/>
            <person name="Utterback T.R."/>
            <person name="Lee C."/>
            <person name="Dimitrov G."/>
            <person name="Jiang L."/>
            <person name="Qin H."/>
            <person name="Weidman J."/>
            <person name="Tran K."/>
            <person name="Kang K.H."/>
            <person name="Hance I.R."/>
            <person name="Nelson K.E."/>
            <person name="Fraser C.M."/>
        </authorList>
    </citation>
    <scope>NUCLEOTIDE SEQUENCE [LARGE SCALE GENOMIC DNA]</scope>
    <source>
        <strain>COL</strain>
    </source>
</reference>
<organism>
    <name type="scientific">Staphylococcus aureus (strain COL)</name>
    <dbReference type="NCBI Taxonomy" id="93062"/>
    <lineage>
        <taxon>Bacteria</taxon>
        <taxon>Bacillati</taxon>
        <taxon>Bacillota</taxon>
        <taxon>Bacilli</taxon>
        <taxon>Bacillales</taxon>
        <taxon>Staphylococcaceae</taxon>
        <taxon>Staphylococcus</taxon>
    </lineage>
</organism>
<name>NIKE_STAAC</name>
<sequence length="233" mass="26257">MIELKHVTFGYNKKQMVLQDINITIPDGENVGILGESGCGKSTLASLVLGLFKPVKGEIYLSDNAVLPIFQHPLTSFNPDWTIETSLKEALYYYRGLTDNTAQDQLLLQHLSTFELNAQLLTKLPSEVSGGQLQRFNVMRSLLAQPRVLICDEITSNLDVIAEQNVINILKAQTITNLNHFIVISHDLSVLQRLVNRIIVLKDGMIVDDFAIEELFNVDRHPYTKELVQAFSY</sequence>
<protein>
    <recommendedName>
        <fullName evidence="1">Nickel import system ATP-binding protein NikE</fullName>
        <ecNumber evidence="1">7.2.2.11</ecNumber>
    </recommendedName>
</protein>
<keyword id="KW-0067">ATP-binding</keyword>
<keyword id="KW-1003">Cell membrane</keyword>
<keyword id="KW-0406">Ion transport</keyword>
<keyword id="KW-0472">Membrane</keyword>
<keyword id="KW-0533">Nickel</keyword>
<keyword id="KW-0921">Nickel transport</keyword>
<keyword id="KW-0547">Nucleotide-binding</keyword>
<keyword id="KW-1278">Translocase</keyword>
<keyword id="KW-0813">Transport</keyword>
<accession>Q5HG41</accession>
<gene>
    <name evidence="1" type="primary">nikE</name>
    <name type="synonym">oppF2</name>
    <name type="ordered locus">SACOL1414</name>
</gene>
<dbReference type="EC" id="7.2.2.11" evidence="1"/>
<dbReference type="EMBL" id="CP000046">
    <property type="protein sequence ID" value="AAW38159.1"/>
    <property type="molecule type" value="Genomic_DNA"/>
</dbReference>
<dbReference type="RefSeq" id="WP_000571258.1">
    <property type="nucleotide sequence ID" value="NZ_JBGOFO010000003.1"/>
</dbReference>
<dbReference type="SMR" id="Q5HG41"/>
<dbReference type="KEGG" id="sac:SACOL1414"/>
<dbReference type="HOGENOM" id="CLU_000604_1_23_9"/>
<dbReference type="Proteomes" id="UP000000530">
    <property type="component" value="Chromosome"/>
</dbReference>
<dbReference type="GO" id="GO:0005886">
    <property type="term" value="C:plasma membrane"/>
    <property type="evidence" value="ECO:0007669"/>
    <property type="project" value="UniProtKB-SubCell"/>
</dbReference>
<dbReference type="GO" id="GO:0015413">
    <property type="term" value="F:ABC-type nickel transporter activity"/>
    <property type="evidence" value="ECO:0007669"/>
    <property type="project" value="UniProtKB-EC"/>
</dbReference>
<dbReference type="GO" id="GO:0005524">
    <property type="term" value="F:ATP binding"/>
    <property type="evidence" value="ECO:0007669"/>
    <property type="project" value="UniProtKB-KW"/>
</dbReference>
<dbReference type="GO" id="GO:0016887">
    <property type="term" value="F:ATP hydrolysis activity"/>
    <property type="evidence" value="ECO:0007669"/>
    <property type="project" value="InterPro"/>
</dbReference>
<dbReference type="CDD" id="cd03257">
    <property type="entry name" value="ABC_NikE_OppD_transporters"/>
    <property type="match status" value="1"/>
</dbReference>
<dbReference type="FunFam" id="3.40.50.300:FF:001829">
    <property type="entry name" value="Nickel import system ATP-binding protein NikE"/>
    <property type="match status" value="1"/>
</dbReference>
<dbReference type="Gene3D" id="3.40.50.300">
    <property type="entry name" value="P-loop containing nucleotide triphosphate hydrolases"/>
    <property type="match status" value="1"/>
</dbReference>
<dbReference type="InterPro" id="IPR003593">
    <property type="entry name" value="AAA+_ATPase"/>
</dbReference>
<dbReference type="InterPro" id="IPR050319">
    <property type="entry name" value="ABC_transp_ATP-bind"/>
</dbReference>
<dbReference type="InterPro" id="IPR003439">
    <property type="entry name" value="ABC_transporter-like_ATP-bd"/>
</dbReference>
<dbReference type="InterPro" id="IPR027417">
    <property type="entry name" value="P-loop_NTPase"/>
</dbReference>
<dbReference type="PANTHER" id="PTHR43776">
    <property type="entry name" value="TRANSPORT ATP-BINDING PROTEIN"/>
    <property type="match status" value="1"/>
</dbReference>
<dbReference type="Pfam" id="PF00005">
    <property type="entry name" value="ABC_tran"/>
    <property type="match status" value="1"/>
</dbReference>
<dbReference type="SMART" id="SM00382">
    <property type="entry name" value="AAA"/>
    <property type="match status" value="1"/>
</dbReference>
<dbReference type="SUPFAM" id="SSF52540">
    <property type="entry name" value="P-loop containing nucleoside triphosphate hydrolases"/>
    <property type="match status" value="1"/>
</dbReference>
<dbReference type="PROSITE" id="PS50893">
    <property type="entry name" value="ABC_TRANSPORTER_2"/>
    <property type="match status" value="1"/>
</dbReference>